<reference key="1">
    <citation type="journal article" date="2004" name="Proc. Natl. Acad. Sci. U.S.A.">
        <title>Genome sequence of the enterobacterial phytopathogen Erwinia carotovora subsp. atroseptica and characterization of virulence factors.</title>
        <authorList>
            <person name="Bell K.S."/>
            <person name="Sebaihia M."/>
            <person name="Pritchard L."/>
            <person name="Holden M.T.G."/>
            <person name="Hyman L.J."/>
            <person name="Holeva M.C."/>
            <person name="Thomson N.R."/>
            <person name="Bentley S.D."/>
            <person name="Churcher L.J.C."/>
            <person name="Mungall K."/>
            <person name="Atkin R."/>
            <person name="Bason N."/>
            <person name="Brooks K."/>
            <person name="Chillingworth T."/>
            <person name="Clark K."/>
            <person name="Doggett J."/>
            <person name="Fraser A."/>
            <person name="Hance Z."/>
            <person name="Hauser H."/>
            <person name="Jagels K."/>
            <person name="Moule S."/>
            <person name="Norbertczak H."/>
            <person name="Ormond D."/>
            <person name="Price C."/>
            <person name="Quail M.A."/>
            <person name="Sanders M."/>
            <person name="Walker D."/>
            <person name="Whitehead S."/>
            <person name="Salmond G.P.C."/>
            <person name="Birch P.R.J."/>
            <person name="Parkhill J."/>
            <person name="Toth I.K."/>
        </authorList>
    </citation>
    <scope>NUCLEOTIDE SEQUENCE [LARGE SCALE GENOMIC DNA]</scope>
    <source>
        <strain>SCRI 1043 / ATCC BAA-672</strain>
    </source>
</reference>
<gene>
    <name evidence="1" type="primary">sstT</name>
    <name type="ordered locus">ECA0651</name>
</gene>
<comment type="function">
    <text evidence="1">Involved in the import of serine and threonine into the cell, with the concomitant import of sodium (symport system).</text>
</comment>
<comment type="catalytic activity">
    <reaction evidence="1">
        <text>L-serine(in) + Na(+)(in) = L-serine(out) + Na(+)(out)</text>
        <dbReference type="Rhea" id="RHEA:29575"/>
        <dbReference type="ChEBI" id="CHEBI:29101"/>
        <dbReference type="ChEBI" id="CHEBI:33384"/>
    </reaction>
    <physiologicalReaction direction="right-to-left" evidence="1">
        <dbReference type="Rhea" id="RHEA:29577"/>
    </physiologicalReaction>
</comment>
<comment type="catalytic activity">
    <reaction evidence="1">
        <text>L-threonine(in) + Na(+)(in) = L-threonine(out) + Na(+)(out)</text>
        <dbReference type="Rhea" id="RHEA:69999"/>
        <dbReference type="ChEBI" id="CHEBI:29101"/>
        <dbReference type="ChEBI" id="CHEBI:57926"/>
    </reaction>
    <physiologicalReaction direction="right-to-left" evidence="1">
        <dbReference type="Rhea" id="RHEA:70001"/>
    </physiologicalReaction>
</comment>
<comment type="subcellular location">
    <subcellularLocation>
        <location evidence="1">Cell inner membrane</location>
        <topology evidence="1">Multi-pass membrane protein</topology>
    </subcellularLocation>
</comment>
<comment type="similarity">
    <text evidence="1">Belongs to the dicarboxylate/amino acid:cation symporter (DAACS) (TC 2.A.23) family.</text>
</comment>
<organism>
    <name type="scientific">Pectobacterium atrosepticum (strain SCRI 1043 / ATCC BAA-672)</name>
    <name type="common">Erwinia carotovora subsp. atroseptica</name>
    <dbReference type="NCBI Taxonomy" id="218491"/>
    <lineage>
        <taxon>Bacteria</taxon>
        <taxon>Pseudomonadati</taxon>
        <taxon>Pseudomonadota</taxon>
        <taxon>Gammaproteobacteria</taxon>
        <taxon>Enterobacterales</taxon>
        <taxon>Pectobacteriaceae</taxon>
        <taxon>Pectobacterium</taxon>
    </lineage>
</organism>
<keyword id="KW-0029">Amino-acid transport</keyword>
<keyword id="KW-0997">Cell inner membrane</keyword>
<keyword id="KW-1003">Cell membrane</keyword>
<keyword id="KW-0472">Membrane</keyword>
<keyword id="KW-1185">Reference proteome</keyword>
<keyword id="KW-0769">Symport</keyword>
<keyword id="KW-0812">Transmembrane</keyword>
<keyword id="KW-1133">Transmembrane helix</keyword>
<keyword id="KW-0813">Transport</keyword>
<accession>Q6D9G4</accession>
<sequence length="415" mass="43224">METQQSRFLQYITRGSLVQQILLGLAAGIILASLSTQAALAAGLLGTLFVGALKAVAPILVLVLVMASIANHQQGQKTNIRPVLFLYLIGTFSAALIAVVLSVLFPSTLALNAQAADITPPSGIVEVLEGLLMSVIANPIHALLNANYIGILVWAVGLGIAFRHGSGSTKSMINDASNAVTMIVRVVIRFAPLGIFGLVASTLAETGFGALWGYAHLLMVLIGGMLLVALVVNPLIVYWKIRSNPYPLVLRCLRESGVTAFFTRSSAANIPVNMELCRKLNLDEDTYSVAIPLGATINMAGAAITITVLTLAAAHTLGIQIDVPTALLLSVVASLCACGASGVAGGSLLLIPLACSMFGISNDIAMQVVAVGFIIGVLQDSAETAVNSSTDVMFIAAVCHAEDAKLAEKERLNLL</sequence>
<dbReference type="EMBL" id="BX950851">
    <property type="protein sequence ID" value="CAG73566.1"/>
    <property type="molecule type" value="Genomic_DNA"/>
</dbReference>
<dbReference type="RefSeq" id="WP_011092268.1">
    <property type="nucleotide sequence ID" value="NC_004547.2"/>
</dbReference>
<dbReference type="SMR" id="Q6D9G4"/>
<dbReference type="STRING" id="218491.ECA0651"/>
<dbReference type="KEGG" id="eca:ECA0651"/>
<dbReference type="PATRIC" id="fig|218491.5.peg.645"/>
<dbReference type="eggNOG" id="COG3633">
    <property type="taxonomic scope" value="Bacteria"/>
</dbReference>
<dbReference type="HOGENOM" id="CLU_044581_0_0_6"/>
<dbReference type="OrthoDB" id="9768885at2"/>
<dbReference type="Proteomes" id="UP000007966">
    <property type="component" value="Chromosome"/>
</dbReference>
<dbReference type="GO" id="GO:0005886">
    <property type="term" value="C:plasma membrane"/>
    <property type="evidence" value="ECO:0007669"/>
    <property type="project" value="UniProtKB-SubCell"/>
</dbReference>
<dbReference type="GO" id="GO:0005295">
    <property type="term" value="F:neutral L-amino acid:sodium symporter activity"/>
    <property type="evidence" value="ECO:0007669"/>
    <property type="project" value="TreeGrafter"/>
</dbReference>
<dbReference type="GO" id="GO:0032329">
    <property type="term" value="P:serine transport"/>
    <property type="evidence" value="ECO:0007669"/>
    <property type="project" value="InterPro"/>
</dbReference>
<dbReference type="GO" id="GO:0015826">
    <property type="term" value="P:threonine transport"/>
    <property type="evidence" value="ECO:0007669"/>
    <property type="project" value="InterPro"/>
</dbReference>
<dbReference type="FunFam" id="1.10.3860.10:FF:000003">
    <property type="entry name" value="Serine/threonine transporter sstT"/>
    <property type="match status" value="1"/>
</dbReference>
<dbReference type="Gene3D" id="1.10.3860.10">
    <property type="entry name" value="Sodium:dicarboxylate symporter"/>
    <property type="match status" value="1"/>
</dbReference>
<dbReference type="HAMAP" id="MF_01582">
    <property type="entry name" value="Ser_Thr_transp_SstT"/>
    <property type="match status" value="1"/>
</dbReference>
<dbReference type="InterPro" id="IPR001991">
    <property type="entry name" value="Na-dicarboxylate_symporter"/>
</dbReference>
<dbReference type="InterPro" id="IPR036458">
    <property type="entry name" value="Na:dicarbo_symporter_sf"/>
</dbReference>
<dbReference type="InterPro" id="IPR023025">
    <property type="entry name" value="Ser_Thr_transp_SstT"/>
</dbReference>
<dbReference type="NCBIfam" id="NF010151">
    <property type="entry name" value="PRK13628.1"/>
    <property type="match status" value="1"/>
</dbReference>
<dbReference type="PANTHER" id="PTHR42865">
    <property type="entry name" value="PROTON/GLUTAMATE-ASPARTATE SYMPORTER"/>
    <property type="match status" value="1"/>
</dbReference>
<dbReference type="PANTHER" id="PTHR42865:SF8">
    <property type="entry name" value="SERINE_THREONINE TRANSPORTER SSTT"/>
    <property type="match status" value="1"/>
</dbReference>
<dbReference type="Pfam" id="PF00375">
    <property type="entry name" value="SDF"/>
    <property type="match status" value="1"/>
</dbReference>
<dbReference type="PRINTS" id="PR00173">
    <property type="entry name" value="EDTRNSPORT"/>
</dbReference>
<dbReference type="SUPFAM" id="SSF118215">
    <property type="entry name" value="Proton glutamate symport protein"/>
    <property type="match status" value="1"/>
</dbReference>
<dbReference type="PROSITE" id="PS00713">
    <property type="entry name" value="NA_DICARBOXYL_SYMP_1"/>
    <property type="match status" value="1"/>
</dbReference>
<proteinExistence type="inferred from homology"/>
<evidence type="ECO:0000255" key="1">
    <source>
        <dbReference type="HAMAP-Rule" id="MF_01582"/>
    </source>
</evidence>
<name>SSTT_PECAS</name>
<protein>
    <recommendedName>
        <fullName evidence="1">Serine/threonine transporter SstT</fullName>
    </recommendedName>
    <alternativeName>
        <fullName evidence="1">Na(+)/serine-threonine symporter</fullName>
    </alternativeName>
</protein>
<feature type="chain" id="PRO_0000309085" description="Serine/threonine transporter SstT">
    <location>
        <begin position="1"/>
        <end position="415"/>
    </location>
</feature>
<feature type="transmembrane region" description="Helical" evidence="1">
    <location>
        <begin position="21"/>
        <end position="41"/>
    </location>
</feature>
<feature type="transmembrane region" description="Helical" evidence="1">
    <location>
        <begin position="45"/>
        <end position="65"/>
    </location>
</feature>
<feature type="transmembrane region" description="Helical" evidence="1">
    <location>
        <begin position="85"/>
        <end position="105"/>
    </location>
</feature>
<feature type="transmembrane region" description="Helical" evidence="1">
    <location>
        <begin position="142"/>
        <end position="162"/>
    </location>
</feature>
<feature type="transmembrane region" description="Helical" evidence="1">
    <location>
        <begin position="193"/>
        <end position="213"/>
    </location>
</feature>
<feature type="transmembrane region" description="Helical" evidence="1">
    <location>
        <begin position="217"/>
        <end position="237"/>
    </location>
</feature>
<feature type="transmembrane region" description="Helical" evidence="1">
    <location>
        <begin position="289"/>
        <end position="309"/>
    </location>
</feature>
<feature type="transmembrane region" description="Helical" evidence="1">
    <location>
        <begin position="331"/>
        <end position="351"/>
    </location>
</feature>